<proteinExistence type="evidence at transcript level"/>
<feature type="chain" id="PRO_0000427563" description="Uncharacterized protein MT3215">
    <location>
        <begin position="1"/>
        <end position="110"/>
    </location>
</feature>
<name>Y3129_MYCTO</name>
<keyword id="KW-1185">Reference proteome</keyword>
<gene>
    <name type="ordered locus">MT3215</name>
</gene>
<dbReference type="EMBL" id="AE000516">
    <property type="protein sequence ID" value="AAK47553.1"/>
    <property type="molecule type" value="Genomic_DNA"/>
</dbReference>
<dbReference type="PIR" id="G70922">
    <property type="entry name" value="G70922"/>
</dbReference>
<dbReference type="RefSeq" id="WP_003416360.1">
    <property type="nucleotide sequence ID" value="NZ_KK341227.1"/>
</dbReference>
<dbReference type="SMR" id="P9WL04"/>
<dbReference type="KEGG" id="mtc:MT3215"/>
<dbReference type="PATRIC" id="fig|83331.31.peg.3465"/>
<dbReference type="HOGENOM" id="CLU_127487_0_1_11"/>
<dbReference type="Proteomes" id="UP000001020">
    <property type="component" value="Chromosome"/>
</dbReference>
<dbReference type="Gene3D" id="2.30.110.10">
    <property type="entry name" value="Electron Transport, Fmn-binding Protein, Chain A"/>
    <property type="match status" value="1"/>
</dbReference>
<dbReference type="InterPro" id="IPR024747">
    <property type="entry name" value="Pyridox_Oxase-rel"/>
</dbReference>
<dbReference type="InterPro" id="IPR012349">
    <property type="entry name" value="Split_barrel_FMN-bd"/>
</dbReference>
<dbReference type="Pfam" id="PF12900">
    <property type="entry name" value="Pyridox_ox_2"/>
    <property type="match status" value="1"/>
</dbReference>
<dbReference type="SUPFAM" id="SSF50475">
    <property type="entry name" value="FMN-binding split barrel"/>
    <property type="match status" value="1"/>
</dbReference>
<accession>P9WL04</accession>
<accession>E0YJK3</accession>
<accession>F2GJ37</accession>
<accession>Q6MX08</accession>
<accession>Q7D628</accession>
<organism>
    <name type="scientific">Mycobacterium tuberculosis (strain CDC 1551 / Oshkosh)</name>
    <dbReference type="NCBI Taxonomy" id="83331"/>
    <lineage>
        <taxon>Bacteria</taxon>
        <taxon>Bacillati</taxon>
        <taxon>Actinomycetota</taxon>
        <taxon>Actinomycetes</taxon>
        <taxon>Mycobacteriales</taxon>
        <taxon>Mycobacteriaceae</taxon>
        <taxon>Mycobacterium</taxon>
        <taxon>Mycobacterium tuberculosis complex</taxon>
    </lineage>
</organism>
<sequence>MVQGRTVLFRTAEGAKLFSAVAKCAVAFEADDHNVAEGWSVIVKVRAQVLTTDAGVREAERAQLLPWTATLKRHCVRVIPWEITGRHFRFGPEPDRSQTFACEASSHNQR</sequence>
<evidence type="ECO:0000269" key="1">
    <source>
    </source>
</evidence>
<comment type="induction">
    <text evidence="1">A member of the dormancy regulon. Induced in response to reduced oxygen tension (hypoxia) and low levels of nitric oxide (NO).</text>
</comment>
<reference key="1">
    <citation type="journal article" date="2002" name="J. Bacteriol.">
        <title>Whole-genome comparison of Mycobacterium tuberculosis clinical and laboratory strains.</title>
        <authorList>
            <person name="Fleischmann R.D."/>
            <person name="Alland D."/>
            <person name="Eisen J.A."/>
            <person name="Carpenter L."/>
            <person name="White O."/>
            <person name="Peterson J.D."/>
            <person name="DeBoy R.T."/>
            <person name="Dodson R.J."/>
            <person name="Gwinn M.L."/>
            <person name="Haft D.H."/>
            <person name="Hickey E.K."/>
            <person name="Kolonay J.F."/>
            <person name="Nelson W.C."/>
            <person name="Umayam L.A."/>
            <person name="Ermolaeva M.D."/>
            <person name="Salzberg S.L."/>
            <person name="Delcher A."/>
            <person name="Utterback T.R."/>
            <person name="Weidman J.F."/>
            <person name="Khouri H.M."/>
            <person name="Gill J."/>
            <person name="Mikula A."/>
            <person name="Bishai W."/>
            <person name="Jacobs W.R. Jr."/>
            <person name="Venter J.C."/>
            <person name="Fraser C.M."/>
        </authorList>
    </citation>
    <scope>NUCLEOTIDE SEQUENCE [LARGE SCALE GENOMIC DNA]</scope>
    <source>
        <strain>CDC 1551 / Oshkosh</strain>
    </source>
</reference>
<reference key="2">
    <citation type="journal article" date="2003" name="J. Exp. Med.">
        <title>Inhibition of respiration by nitric oxide induces a Mycobacterium tuberculosis dormancy program.</title>
        <authorList>
            <person name="Voskuil M.I."/>
            <person name="Schnappinger D."/>
            <person name="Visconti K.C."/>
            <person name="Harrell M.I."/>
            <person name="Dolganov G.M."/>
            <person name="Sherman D.R."/>
            <person name="Schoolnik G.K."/>
        </authorList>
    </citation>
    <scope>INDUCTION BY NITRIC OXIDE (NO) AND BY HYPOXIA</scope>
    <scope>DORMANCY REGULON</scope>
    <source>
        <strain>CDC 1551 / Oshkosh</strain>
    </source>
</reference>
<protein>
    <recommendedName>
        <fullName>Uncharacterized protein MT3215</fullName>
    </recommendedName>
</protein>